<name>RPOY_STRPN</name>
<accession>Q97T34</accession>
<gene>
    <name evidence="1" type="primary">rpoY</name>
    <name type="ordered locus">SP_0122</name>
</gene>
<dbReference type="EC" id="2.7.7.6" evidence="1"/>
<dbReference type="EMBL" id="AE005672">
    <property type="protein sequence ID" value="AAK74308.1"/>
    <property type="molecule type" value="Genomic_DNA"/>
</dbReference>
<dbReference type="PIR" id="C95014">
    <property type="entry name" value="C95014"/>
</dbReference>
<dbReference type="RefSeq" id="WP_000639589.1">
    <property type="nucleotide sequence ID" value="NZ_CP155539.1"/>
</dbReference>
<dbReference type="SMR" id="Q97T34"/>
<dbReference type="IntAct" id="Q97T34">
    <property type="interactions" value="1"/>
</dbReference>
<dbReference type="PaxDb" id="170187-SP_0122"/>
<dbReference type="EnsemblBacteria" id="AAK74308">
    <property type="protein sequence ID" value="AAK74308"/>
    <property type="gene ID" value="SP_0122"/>
</dbReference>
<dbReference type="KEGG" id="spn:SP_0122"/>
<dbReference type="eggNOG" id="COG5503">
    <property type="taxonomic scope" value="Bacteria"/>
</dbReference>
<dbReference type="PhylomeDB" id="Q97T34"/>
<dbReference type="BioCyc" id="SPNE170187:G1FZB-128-MONOMER"/>
<dbReference type="Proteomes" id="UP000000585">
    <property type="component" value="Chromosome"/>
</dbReference>
<dbReference type="GO" id="GO:0000428">
    <property type="term" value="C:DNA-directed RNA polymerase complex"/>
    <property type="evidence" value="ECO:0007669"/>
    <property type="project" value="UniProtKB-KW"/>
</dbReference>
<dbReference type="GO" id="GO:0003677">
    <property type="term" value="F:DNA binding"/>
    <property type="evidence" value="ECO:0007669"/>
    <property type="project" value="UniProtKB-UniRule"/>
</dbReference>
<dbReference type="GO" id="GO:0003899">
    <property type="term" value="F:DNA-directed RNA polymerase activity"/>
    <property type="evidence" value="ECO:0007669"/>
    <property type="project" value="UniProtKB-UniRule"/>
</dbReference>
<dbReference type="GO" id="GO:0006351">
    <property type="term" value="P:DNA-templated transcription"/>
    <property type="evidence" value="ECO:0007669"/>
    <property type="project" value="UniProtKB-UniRule"/>
</dbReference>
<dbReference type="Gene3D" id="3.10.20.730">
    <property type="entry name" value="RNAP, epsilon subunit-like"/>
    <property type="match status" value="1"/>
</dbReference>
<dbReference type="HAMAP" id="MF_01553">
    <property type="entry name" value="RNApol_bact_RpoY"/>
    <property type="match status" value="1"/>
</dbReference>
<dbReference type="InterPro" id="IPR009907">
    <property type="entry name" value="RpoY"/>
</dbReference>
<dbReference type="NCBIfam" id="NF010188">
    <property type="entry name" value="PRK13667.1"/>
    <property type="match status" value="1"/>
</dbReference>
<dbReference type="Pfam" id="PF07288">
    <property type="entry name" value="RpoY"/>
    <property type="match status" value="1"/>
</dbReference>
<comment type="function">
    <text evidence="1">A non-essential component of RNA polymerase (RNAP).</text>
</comment>
<comment type="catalytic activity">
    <reaction evidence="1">
        <text>RNA(n) + a ribonucleoside 5'-triphosphate = RNA(n+1) + diphosphate</text>
        <dbReference type="Rhea" id="RHEA:21248"/>
        <dbReference type="Rhea" id="RHEA-COMP:14527"/>
        <dbReference type="Rhea" id="RHEA-COMP:17342"/>
        <dbReference type="ChEBI" id="CHEBI:33019"/>
        <dbReference type="ChEBI" id="CHEBI:61557"/>
        <dbReference type="ChEBI" id="CHEBI:140395"/>
        <dbReference type="EC" id="2.7.7.6"/>
    </reaction>
</comment>
<comment type="subunit">
    <text evidence="1">RNAP is composed of a core of 2 alpha, a beta and a beta' subunit. The core is associated with a delta subunit, and at least one of epsilon or omega. When a sigma factor is associated with the core the holoenzyme is formed, which can initiate transcription.</text>
</comment>
<comment type="interaction">
    <interactant intactId="EBI-6475457">
        <id>Q97T34</id>
    </interactant>
    <interactant intactId="EBI-6475454">
        <id>A0A0H2UN16</id>
        <label>SP_0099</label>
    </interactant>
    <organismsDiffer>false</organismsDiffer>
    <experiments>4</experiments>
</comment>
<comment type="similarity">
    <text evidence="1">Belongs to the RNA polymerase subunit epsilon family.</text>
</comment>
<evidence type="ECO:0000255" key="1">
    <source>
        <dbReference type="HAMAP-Rule" id="MF_01553"/>
    </source>
</evidence>
<proteinExistence type="evidence at protein level"/>
<reference key="1">
    <citation type="journal article" date="2001" name="Science">
        <title>Complete genome sequence of a virulent isolate of Streptococcus pneumoniae.</title>
        <authorList>
            <person name="Tettelin H."/>
            <person name="Nelson K.E."/>
            <person name="Paulsen I.T."/>
            <person name="Eisen J.A."/>
            <person name="Read T.D."/>
            <person name="Peterson S.N."/>
            <person name="Heidelberg J.F."/>
            <person name="DeBoy R.T."/>
            <person name="Haft D.H."/>
            <person name="Dodson R.J."/>
            <person name="Durkin A.S."/>
            <person name="Gwinn M.L."/>
            <person name="Kolonay J.F."/>
            <person name="Nelson W.C."/>
            <person name="Peterson J.D."/>
            <person name="Umayam L.A."/>
            <person name="White O."/>
            <person name="Salzberg S.L."/>
            <person name="Lewis M.R."/>
            <person name="Radune D."/>
            <person name="Holtzapple E.K."/>
            <person name="Khouri H.M."/>
            <person name="Wolf A.M."/>
            <person name="Utterback T.R."/>
            <person name="Hansen C.L."/>
            <person name="McDonald L.A."/>
            <person name="Feldblyum T.V."/>
            <person name="Angiuoli S.V."/>
            <person name="Dickinson T."/>
            <person name="Hickey E.K."/>
            <person name="Holt I.E."/>
            <person name="Loftus B.J."/>
            <person name="Yang F."/>
            <person name="Smith H.O."/>
            <person name="Venter J.C."/>
            <person name="Dougherty B.A."/>
            <person name="Morrison D.A."/>
            <person name="Hollingshead S.K."/>
            <person name="Fraser C.M."/>
        </authorList>
    </citation>
    <scope>NUCLEOTIDE SEQUENCE [LARGE SCALE GENOMIC DNA]</scope>
    <source>
        <strain>ATCC BAA-334 / TIGR4</strain>
    </source>
</reference>
<organism>
    <name type="scientific">Streptococcus pneumoniae serotype 4 (strain ATCC BAA-334 / TIGR4)</name>
    <dbReference type="NCBI Taxonomy" id="170187"/>
    <lineage>
        <taxon>Bacteria</taxon>
        <taxon>Bacillati</taxon>
        <taxon>Bacillota</taxon>
        <taxon>Bacilli</taxon>
        <taxon>Lactobacillales</taxon>
        <taxon>Streptococcaceae</taxon>
        <taxon>Streptococcus</taxon>
    </lineage>
</organism>
<protein>
    <recommendedName>
        <fullName evidence="1">DNA-directed RNA polymerase subunit epsilon</fullName>
        <shortName evidence="1">RNAP epsilon subunit</shortName>
        <ecNumber evidence="1">2.7.7.6</ecNumber>
    </recommendedName>
    <alternativeName>
        <fullName evidence="1">RNA polymerase epsilon subunit</fullName>
    </alternativeName>
    <alternativeName>
        <fullName evidence="1">Transcriptase subunit epsilon</fullName>
    </alternativeName>
</protein>
<keyword id="KW-0240">DNA-directed RNA polymerase</keyword>
<keyword id="KW-0548">Nucleotidyltransferase</keyword>
<keyword id="KW-1185">Reference proteome</keyword>
<keyword id="KW-0804">Transcription</keyword>
<keyword id="KW-0808">Transferase</keyword>
<sequence>MIYKVFYQETKERSPRRETTRTLYLDIDASSELEGRITARQLVEENRPEYNIEYIELLSDKLLDYEKETGAFEITEF</sequence>
<feature type="chain" id="PRO_0000163147" description="DNA-directed RNA polymerase subunit epsilon">
    <location>
        <begin position="1"/>
        <end position="77"/>
    </location>
</feature>